<proteinExistence type="inferred from homology"/>
<name>ATPB_SYNPW</name>
<dbReference type="EC" id="7.1.2.2" evidence="1"/>
<dbReference type="EMBL" id="CT971583">
    <property type="protein sequence ID" value="CAK24426.1"/>
    <property type="molecule type" value="Genomic_DNA"/>
</dbReference>
<dbReference type="SMR" id="A5GNB1"/>
<dbReference type="STRING" id="32051.SynWH7803_2000"/>
<dbReference type="KEGG" id="syx:SynWH7803_2000"/>
<dbReference type="eggNOG" id="COG0055">
    <property type="taxonomic scope" value="Bacteria"/>
</dbReference>
<dbReference type="HOGENOM" id="CLU_022398_0_2_3"/>
<dbReference type="OrthoDB" id="9801639at2"/>
<dbReference type="Proteomes" id="UP000001566">
    <property type="component" value="Chromosome"/>
</dbReference>
<dbReference type="GO" id="GO:0031676">
    <property type="term" value="C:plasma membrane-derived thylakoid membrane"/>
    <property type="evidence" value="ECO:0007669"/>
    <property type="project" value="UniProtKB-SubCell"/>
</dbReference>
<dbReference type="GO" id="GO:0045259">
    <property type="term" value="C:proton-transporting ATP synthase complex"/>
    <property type="evidence" value="ECO:0007669"/>
    <property type="project" value="UniProtKB-KW"/>
</dbReference>
<dbReference type="GO" id="GO:0005524">
    <property type="term" value="F:ATP binding"/>
    <property type="evidence" value="ECO:0007669"/>
    <property type="project" value="UniProtKB-UniRule"/>
</dbReference>
<dbReference type="GO" id="GO:0016887">
    <property type="term" value="F:ATP hydrolysis activity"/>
    <property type="evidence" value="ECO:0007669"/>
    <property type="project" value="InterPro"/>
</dbReference>
<dbReference type="GO" id="GO:0046933">
    <property type="term" value="F:proton-transporting ATP synthase activity, rotational mechanism"/>
    <property type="evidence" value="ECO:0007669"/>
    <property type="project" value="UniProtKB-UniRule"/>
</dbReference>
<dbReference type="CDD" id="cd18110">
    <property type="entry name" value="ATP-synt_F1_beta_C"/>
    <property type="match status" value="1"/>
</dbReference>
<dbReference type="CDD" id="cd18115">
    <property type="entry name" value="ATP-synt_F1_beta_N"/>
    <property type="match status" value="1"/>
</dbReference>
<dbReference type="CDD" id="cd01133">
    <property type="entry name" value="F1-ATPase_beta_CD"/>
    <property type="match status" value="1"/>
</dbReference>
<dbReference type="FunFam" id="1.10.1140.10:FF:000001">
    <property type="entry name" value="ATP synthase subunit beta"/>
    <property type="match status" value="1"/>
</dbReference>
<dbReference type="FunFam" id="3.40.50.300:FF:000004">
    <property type="entry name" value="ATP synthase subunit beta"/>
    <property type="match status" value="1"/>
</dbReference>
<dbReference type="FunFam" id="2.40.10.170:FF:000002">
    <property type="entry name" value="ATP synthase subunit beta, chloroplastic"/>
    <property type="match status" value="1"/>
</dbReference>
<dbReference type="Gene3D" id="2.40.10.170">
    <property type="match status" value="1"/>
</dbReference>
<dbReference type="Gene3D" id="1.10.1140.10">
    <property type="entry name" value="Bovine Mitochondrial F1-atpase, Atp Synthase Beta Chain, Chain D, domain 3"/>
    <property type="match status" value="1"/>
</dbReference>
<dbReference type="Gene3D" id="3.40.50.300">
    <property type="entry name" value="P-loop containing nucleotide triphosphate hydrolases"/>
    <property type="match status" value="1"/>
</dbReference>
<dbReference type="HAMAP" id="MF_01347">
    <property type="entry name" value="ATP_synth_beta_bact"/>
    <property type="match status" value="1"/>
</dbReference>
<dbReference type="InterPro" id="IPR003593">
    <property type="entry name" value="AAA+_ATPase"/>
</dbReference>
<dbReference type="InterPro" id="IPR055190">
    <property type="entry name" value="ATP-synt_VA_C"/>
</dbReference>
<dbReference type="InterPro" id="IPR005722">
    <property type="entry name" value="ATP_synth_F1_bsu"/>
</dbReference>
<dbReference type="InterPro" id="IPR020003">
    <property type="entry name" value="ATPase_a/bsu_AS"/>
</dbReference>
<dbReference type="InterPro" id="IPR050053">
    <property type="entry name" value="ATPase_alpha/beta_chains"/>
</dbReference>
<dbReference type="InterPro" id="IPR004100">
    <property type="entry name" value="ATPase_F1/V1/A1_a/bsu_N"/>
</dbReference>
<dbReference type="InterPro" id="IPR036121">
    <property type="entry name" value="ATPase_F1/V1/A1_a/bsu_N_sf"/>
</dbReference>
<dbReference type="InterPro" id="IPR000194">
    <property type="entry name" value="ATPase_F1/V1/A1_a/bsu_nucl-bd"/>
</dbReference>
<dbReference type="InterPro" id="IPR024034">
    <property type="entry name" value="ATPase_F1/V1_b/a_C"/>
</dbReference>
<dbReference type="InterPro" id="IPR027417">
    <property type="entry name" value="P-loop_NTPase"/>
</dbReference>
<dbReference type="NCBIfam" id="TIGR01039">
    <property type="entry name" value="atpD"/>
    <property type="match status" value="1"/>
</dbReference>
<dbReference type="PANTHER" id="PTHR15184">
    <property type="entry name" value="ATP SYNTHASE"/>
    <property type="match status" value="1"/>
</dbReference>
<dbReference type="PANTHER" id="PTHR15184:SF71">
    <property type="entry name" value="ATP SYNTHASE SUBUNIT BETA, MITOCHONDRIAL"/>
    <property type="match status" value="1"/>
</dbReference>
<dbReference type="Pfam" id="PF00006">
    <property type="entry name" value="ATP-synt_ab"/>
    <property type="match status" value="1"/>
</dbReference>
<dbReference type="Pfam" id="PF02874">
    <property type="entry name" value="ATP-synt_ab_N"/>
    <property type="match status" value="1"/>
</dbReference>
<dbReference type="Pfam" id="PF22919">
    <property type="entry name" value="ATP-synt_VA_C"/>
    <property type="match status" value="1"/>
</dbReference>
<dbReference type="SMART" id="SM00382">
    <property type="entry name" value="AAA"/>
    <property type="match status" value="1"/>
</dbReference>
<dbReference type="SUPFAM" id="SSF47917">
    <property type="entry name" value="C-terminal domain of alpha and beta subunits of F1 ATP synthase"/>
    <property type="match status" value="1"/>
</dbReference>
<dbReference type="SUPFAM" id="SSF50615">
    <property type="entry name" value="N-terminal domain of alpha and beta subunits of F1 ATP synthase"/>
    <property type="match status" value="1"/>
</dbReference>
<dbReference type="SUPFAM" id="SSF52540">
    <property type="entry name" value="P-loop containing nucleoside triphosphate hydrolases"/>
    <property type="match status" value="1"/>
</dbReference>
<dbReference type="PROSITE" id="PS00152">
    <property type="entry name" value="ATPASE_ALPHA_BETA"/>
    <property type="match status" value="1"/>
</dbReference>
<accession>A5GNB1</accession>
<keyword id="KW-0066">ATP synthesis</keyword>
<keyword id="KW-0067">ATP-binding</keyword>
<keyword id="KW-0139">CF(1)</keyword>
<keyword id="KW-0375">Hydrogen ion transport</keyword>
<keyword id="KW-0406">Ion transport</keyword>
<keyword id="KW-0472">Membrane</keyword>
<keyword id="KW-0547">Nucleotide-binding</keyword>
<keyword id="KW-1185">Reference proteome</keyword>
<keyword id="KW-0793">Thylakoid</keyword>
<keyword id="KW-1278">Translocase</keyword>
<keyword id="KW-0813">Transport</keyword>
<organism>
    <name type="scientific">Synechococcus sp. (strain WH7803)</name>
    <dbReference type="NCBI Taxonomy" id="32051"/>
    <lineage>
        <taxon>Bacteria</taxon>
        <taxon>Bacillati</taxon>
        <taxon>Cyanobacteriota</taxon>
        <taxon>Cyanophyceae</taxon>
        <taxon>Synechococcales</taxon>
        <taxon>Synechococcaceae</taxon>
        <taxon>Synechococcus</taxon>
    </lineage>
</organism>
<gene>
    <name evidence="1" type="primary">atpD</name>
    <name evidence="1" type="synonym">atpB</name>
    <name type="ordered locus">SynWH7803_2000</name>
</gene>
<feature type="chain" id="PRO_1000055174" description="ATP synthase subunit beta">
    <location>
        <begin position="1"/>
        <end position="487"/>
    </location>
</feature>
<feature type="binding site" evidence="1">
    <location>
        <begin position="164"/>
        <end position="171"/>
    </location>
    <ligand>
        <name>ATP</name>
        <dbReference type="ChEBI" id="CHEBI:30616"/>
    </ligand>
</feature>
<reference key="1">
    <citation type="submission" date="2006-05" db="EMBL/GenBank/DDBJ databases">
        <authorList>
            <consortium name="Genoscope"/>
        </authorList>
    </citation>
    <scope>NUCLEOTIDE SEQUENCE [LARGE SCALE GENOMIC DNA]</scope>
    <source>
        <strain>WH7803</strain>
    </source>
</reference>
<evidence type="ECO:0000255" key="1">
    <source>
        <dbReference type="HAMAP-Rule" id="MF_01347"/>
    </source>
</evidence>
<comment type="function">
    <text evidence="1">Produces ATP from ADP in the presence of a proton gradient across the membrane. The catalytic sites are hosted primarily by the beta subunits.</text>
</comment>
<comment type="catalytic activity">
    <reaction evidence="1">
        <text>ATP + H2O + 4 H(+)(in) = ADP + phosphate + 5 H(+)(out)</text>
        <dbReference type="Rhea" id="RHEA:57720"/>
        <dbReference type="ChEBI" id="CHEBI:15377"/>
        <dbReference type="ChEBI" id="CHEBI:15378"/>
        <dbReference type="ChEBI" id="CHEBI:30616"/>
        <dbReference type="ChEBI" id="CHEBI:43474"/>
        <dbReference type="ChEBI" id="CHEBI:456216"/>
        <dbReference type="EC" id="7.1.2.2"/>
    </reaction>
</comment>
<comment type="subunit">
    <text evidence="1">F-type ATPases have 2 components, CF(1) - the catalytic core - and CF(0) - the membrane proton channel. CF(1) has five subunits: alpha(3), beta(3), gamma(1), delta(1), epsilon(1). CF(0) has four main subunits: a(1), b(1), b'(1) and c(9-12).</text>
</comment>
<comment type="subcellular location">
    <subcellularLocation>
        <location evidence="1">Cellular thylakoid membrane</location>
        <topology evidence="1">Peripheral membrane protein</topology>
    </subcellularLocation>
</comment>
<comment type="similarity">
    <text evidence="1">Belongs to the ATPase alpha/beta chains family.</text>
</comment>
<protein>
    <recommendedName>
        <fullName evidence="1">ATP synthase subunit beta</fullName>
        <ecNumber evidence="1">7.1.2.2</ecNumber>
    </recommendedName>
    <alternativeName>
        <fullName evidence="1">ATP synthase F1 sector subunit beta</fullName>
    </alternativeName>
    <alternativeName>
        <fullName evidence="1">F-ATPase subunit beta</fullName>
    </alternativeName>
</protein>
<sequence length="487" mass="51867">MAAAAPASAGTKGVVRQVIGPVLDVEFPAGKLPKILNALRIEGTNTAGQPVALTAEVQQLLGDHRVRAVAMSGTDGLVRGMEALDTGAPISVPVGEATLGRIFNVLGEPVDEQGPVNASATAPIHRSAPKLTELETKPKVFETGIKVIDLLAPYRQGGKVGLFGGAGVGKTVLIQELINNIAKEHGGVSVFGGVGERTREGNDLYEEFKDSGVINAEDLSKSKVALCYGQMNEPPGARMRVGLSALTMAEHFRDVNKQDVLLFVDNIFRFVQAGSEVSALLGRMPSAVGYQPTLGTDVGELQERITSTLEGSITSIQAVYVPADDLTDPAPATTFAHLDATTVLSRGLASKGIYPAVDPLDSTSTMLQPAVVGEEHYKTARAVQSTLQRYKELQDIIAILGLDELSEDDRRTVDRARKIEKFLSQPFFVAEIFTGMPGVYVKLEETIAGFNQILAGELDHLPEQAFYLVGNIDQVKAKAEKIAAEAK</sequence>